<comment type="subcellular location">
    <subcellularLocation>
        <location evidence="1">Membrane</location>
        <topology evidence="1">Multi-pass membrane protein</topology>
    </subcellularLocation>
</comment>
<comment type="tissue specificity">
    <text evidence="2">Expressed exclusively in liver in both embryo and adult.</text>
</comment>
<comment type="similarity">
    <text evidence="5">Belongs to the major facilitator (TC 2.A.1) superfamily. Organic cation transporter (TC 2.A.1.19) family.</text>
</comment>
<feature type="chain" id="PRO_0000328926" description="Solute carrier family 22 member 25">
    <location>
        <begin position="1"/>
        <end position="547"/>
    </location>
</feature>
<feature type="topological domain" description="Cytoplasmic" evidence="1">
    <location>
        <begin position="1"/>
        <end position="9"/>
    </location>
</feature>
<feature type="transmembrane region" description="Helical; Name=1" evidence="1">
    <location>
        <begin position="10"/>
        <end position="30"/>
    </location>
</feature>
<feature type="topological domain" description="Extracellular" evidence="1">
    <location>
        <begin position="31"/>
        <end position="145"/>
    </location>
</feature>
<feature type="transmembrane region" description="Helical; Name=2" evidence="1">
    <location>
        <begin position="146"/>
        <end position="166"/>
    </location>
</feature>
<feature type="topological domain" description="Cytoplasmic" evidence="1">
    <location>
        <begin position="167"/>
        <end position="177"/>
    </location>
</feature>
<feature type="transmembrane region" description="Helical; Name=3" evidence="1">
    <location>
        <begin position="178"/>
        <end position="198"/>
    </location>
</feature>
<feature type="topological domain" description="Extracellular" evidence="1">
    <location>
        <begin position="199"/>
        <end position="204"/>
    </location>
</feature>
<feature type="transmembrane region" description="Helical; Name=4" evidence="1">
    <location>
        <begin position="205"/>
        <end position="225"/>
    </location>
</feature>
<feature type="topological domain" description="Cytoplasmic" evidence="1">
    <location>
        <begin position="226"/>
        <end position="234"/>
    </location>
</feature>
<feature type="transmembrane region" description="Helical; Name=5" evidence="1">
    <location>
        <begin position="235"/>
        <end position="255"/>
    </location>
</feature>
<feature type="topological domain" description="Extracellular" evidence="1">
    <location>
        <begin position="256"/>
        <end position="259"/>
    </location>
</feature>
<feature type="transmembrane region" description="Helical; Name=6" evidence="1">
    <location>
        <begin position="260"/>
        <end position="280"/>
    </location>
</feature>
<feature type="topological domain" description="Cytoplasmic" evidence="1">
    <location>
        <begin position="281"/>
        <end position="349"/>
    </location>
</feature>
<feature type="transmembrane region" description="Helical; Name=7" evidence="1">
    <location>
        <begin position="350"/>
        <end position="370"/>
    </location>
</feature>
<feature type="topological domain" description="Extracellular" evidence="1">
    <location>
        <begin position="371"/>
        <end position="377"/>
    </location>
</feature>
<feature type="transmembrane region" description="Helical; Name=8" evidence="1">
    <location>
        <begin position="378"/>
        <end position="398"/>
    </location>
</feature>
<feature type="topological domain" description="Cytoplasmic" evidence="1">
    <location>
        <begin position="399"/>
        <end position="406"/>
    </location>
</feature>
<feature type="transmembrane region" description="Helical; Name=9" evidence="1">
    <location>
        <begin position="407"/>
        <end position="427"/>
    </location>
</feature>
<feature type="topological domain" description="Extracellular" evidence="1">
    <location>
        <begin position="428"/>
        <end position="434"/>
    </location>
</feature>
<feature type="transmembrane region" description="Helical; Name=10" evidence="1">
    <location>
        <begin position="435"/>
        <end position="455"/>
    </location>
</feature>
<feature type="topological domain" description="Cytoplasmic" evidence="1">
    <location>
        <begin position="456"/>
        <end position="470"/>
    </location>
</feature>
<feature type="transmembrane region" description="Helical; Name=11" evidence="1">
    <location>
        <begin position="471"/>
        <end position="491"/>
    </location>
</feature>
<feature type="topological domain" description="Extracellular" evidence="1">
    <location>
        <begin position="492"/>
        <end position="494"/>
    </location>
</feature>
<feature type="transmembrane region" description="Helical; Name=12" evidence="1">
    <location>
        <begin position="495"/>
        <end position="515"/>
    </location>
</feature>
<feature type="topological domain" description="Cytoplasmic" evidence="1">
    <location>
        <begin position="516"/>
        <end position="547"/>
    </location>
</feature>
<feature type="glycosylation site" description="N-linked (GlcNAc...) asparagine" evidence="1">
    <location>
        <position position="56"/>
    </location>
</feature>
<feature type="glycosylation site" description="N-linked (GlcNAc...) asparagine" evidence="1">
    <location>
        <position position="102"/>
    </location>
</feature>
<feature type="sequence variant" id="VAR_057783" description="In dbSNP:rs35722529.">
    <original>R</original>
    <variation>C</variation>
    <location>
        <position position="89"/>
    </location>
</feature>
<feature type="sequence variant" id="VAR_042576" description="In dbSNP:rs11231409." evidence="3">
    <original>S</original>
    <variation>G</variation>
    <location>
        <position position="250"/>
    </location>
</feature>
<feature type="sequence variant" id="VAR_042577" description="In dbSNP:rs11231397." evidence="3">
    <original>R</original>
    <variation>T</variation>
    <location>
        <position position="300"/>
    </location>
</feature>
<feature type="sequence variant" id="VAR_057784" description="In dbSNP:rs17157907.">
    <original>G</original>
    <variation>A</variation>
    <location>
        <position position="448"/>
    </location>
</feature>
<feature type="sequence variant" id="VAR_060287" description="In dbSNP:rs6591771." evidence="2 3">
    <original>M</original>
    <variation>V</variation>
    <location>
        <position position="486"/>
    </location>
</feature>
<sequence>MAFQDLLDQVGGLGRFQILQMVFLIMFNVIVYHQTQLENFAAFILDHRCWVHILDNDTIPDNDPGTLSQDALLRISIPFDSNLRPEKCRRFVHPQWKLIHLNGTFPNTSEPDTEPCVDGWVYDQSSFPSTIVTKWDLVCESQPLNSVAKFLFMAGMMVGGNLYGHLSDRFGRKFVLRWSYLQLAIVGTCAAFAPTILVYCSLRFLAGAATFSIIVNTVLLIVEWITHQFCAMALTLTLCAASIGHITLGSLAFVIRDQCILQLVMSAPCFVFFLFSRWLAESARWLIINNKPEEGLKELRKAAHRNGMKNAEDILTMEVLKSTMKQELEAAQKKHSLCELLRIPNICKRICFLSFVRFASTIPFWGLTLHLQHLGNNVFLLQTLFGAVTLLANCVAPWALNHMSRRLSQMLLMFLLATCLLAIIFVPQEMQTLRVVLATLGVGAASLGITCSTAQENELIPSIIRGRATGITGNFANIGGALASLMMILSIYSRPLPWIIYGVFAILSGLVVLLLPETRNQPLLDSIQDVENEGVNSLAAPQRSSVL</sequence>
<gene>
    <name evidence="8" type="primary">SLC22A25</name>
    <name evidence="4" type="synonym">UST6</name>
</gene>
<protein>
    <recommendedName>
        <fullName>Solute carrier family 22 member 25</fullName>
    </recommendedName>
    <alternativeName>
        <fullName>Organic anion transporter UST6</fullName>
    </alternativeName>
</protein>
<reference evidence="5 7" key="1">
    <citation type="journal article" date="2004" name="Physiol. Genomics">
        <title>Novel slc22 transporter homologs in fly, worm, and human clarify the phylogeny of organic anion and cation transporters.</title>
        <authorList>
            <person name="Eraly S.A."/>
            <person name="Monte J.C."/>
            <person name="Nigam S.K."/>
        </authorList>
    </citation>
    <scope>NUCLEOTIDE SEQUENCE [MRNA]</scope>
    <scope>TISSUE SPECIFICITY</scope>
    <scope>VARIANT VAL-486</scope>
    <source>
        <tissue evidence="2">Liver</tissue>
    </source>
</reference>
<reference key="2">
    <citation type="journal article" date="2006" name="Nature">
        <title>Human chromosome 11 DNA sequence and analysis including novel gene identification.</title>
        <authorList>
            <person name="Taylor T.D."/>
            <person name="Noguchi H."/>
            <person name="Totoki Y."/>
            <person name="Toyoda A."/>
            <person name="Kuroki Y."/>
            <person name="Dewar K."/>
            <person name="Lloyd C."/>
            <person name="Itoh T."/>
            <person name="Takeda T."/>
            <person name="Kim D.-W."/>
            <person name="She X."/>
            <person name="Barlow K.F."/>
            <person name="Bloom T."/>
            <person name="Bruford E."/>
            <person name="Chang J.L."/>
            <person name="Cuomo C.A."/>
            <person name="Eichler E."/>
            <person name="FitzGerald M.G."/>
            <person name="Jaffe D.B."/>
            <person name="LaButti K."/>
            <person name="Nicol R."/>
            <person name="Park H.-S."/>
            <person name="Seaman C."/>
            <person name="Sougnez C."/>
            <person name="Yang X."/>
            <person name="Zimmer A.R."/>
            <person name="Zody M.C."/>
            <person name="Birren B.W."/>
            <person name="Nusbaum C."/>
            <person name="Fujiyama A."/>
            <person name="Hattori M."/>
            <person name="Rogers J."/>
            <person name="Lander E.S."/>
            <person name="Sakaki Y."/>
        </authorList>
    </citation>
    <scope>NUCLEOTIDE SEQUENCE [LARGE SCALE GENOMIC DNA]</scope>
</reference>
<reference evidence="5 6" key="3">
    <citation type="journal article" date="2004" name="Genome Res.">
        <title>The status, quality, and expansion of the NIH full-length cDNA project: the Mammalian Gene Collection (MGC).</title>
        <authorList>
            <consortium name="The MGC Project Team"/>
        </authorList>
    </citation>
    <scope>NUCLEOTIDE SEQUENCE [LARGE SCALE MRNA]</scope>
    <scope>VARIANTS GLY-250; THR-300 AND VAL-486</scope>
</reference>
<keyword id="KW-0325">Glycoprotein</keyword>
<keyword id="KW-0472">Membrane</keyword>
<keyword id="KW-1185">Reference proteome</keyword>
<keyword id="KW-0812">Transmembrane</keyword>
<keyword id="KW-1133">Transmembrane helix</keyword>
<keyword id="KW-0813">Transport</keyword>
<dbReference type="EMBL" id="AY437532">
    <property type="protein sequence ID" value="AAR84082.1"/>
    <property type="molecule type" value="mRNA"/>
</dbReference>
<dbReference type="EMBL" id="AP001880">
    <property type="status" value="NOT_ANNOTATED_CDS"/>
    <property type="molecule type" value="Genomic_DNA"/>
</dbReference>
<dbReference type="EMBL" id="AP003420">
    <property type="status" value="NOT_ANNOTATED_CDS"/>
    <property type="molecule type" value="Genomic_DNA"/>
</dbReference>
<dbReference type="EMBL" id="BC101316">
    <property type="protein sequence ID" value="AAI01317.1"/>
    <property type="molecule type" value="mRNA"/>
</dbReference>
<dbReference type="CCDS" id="CCDS31592.1"/>
<dbReference type="RefSeq" id="NP_955384.3">
    <property type="nucleotide sequence ID" value="NM_199352.6"/>
</dbReference>
<dbReference type="RefSeq" id="XP_016873176.1">
    <property type="nucleotide sequence ID" value="XM_017017687.1"/>
</dbReference>
<dbReference type="SMR" id="Q6T423"/>
<dbReference type="BioGRID" id="132365">
    <property type="interactions" value="3"/>
</dbReference>
<dbReference type="FunCoup" id="Q6T423">
    <property type="interactions" value="29"/>
</dbReference>
<dbReference type="STRING" id="9606.ENSP00000307443"/>
<dbReference type="TCDB" id="2.A.1.19.33">
    <property type="family name" value="the major facilitator superfamily (mfs)"/>
</dbReference>
<dbReference type="GlyCosmos" id="Q6T423">
    <property type="glycosylation" value="2 sites, No reported glycans"/>
</dbReference>
<dbReference type="GlyGen" id="Q6T423">
    <property type="glycosylation" value="2 sites"/>
</dbReference>
<dbReference type="iPTMnet" id="Q6T423"/>
<dbReference type="PhosphoSitePlus" id="Q6T423"/>
<dbReference type="BioMuta" id="SLC22A25"/>
<dbReference type="DMDM" id="296452891"/>
<dbReference type="jPOST" id="Q6T423"/>
<dbReference type="MassIVE" id="Q6T423"/>
<dbReference type="PaxDb" id="9606-ENSP00000307443"/>
<dbReference type="PeptideAtlas" id="Q6T423"/>
<dbReference type="Antibodypedia" id="51271">
    <property type="antibodies" value="42 antibodies from 10 providers"/>
</dbReference>
<dbReference type="DNASU" id="387601"/>
<dbReference type="Ensembl" id="ENST00000306494.11">
    <property type="protein sequence ID" value="ENSP00000307443.6"/>
    <property type="gene ID" value="ENSG00000196600.13"/>
</dbReference>
<dbReference type="GeneID" id="387601"/>
<dbReference type="KEGG" id="hsa:387601"/>
<dbReference type="MANE-Select" id="ENST00000306494.11">
    <property type="protein sequence ID" value="ENSP00000307443.6"/>
    <property type="RefSeq nucleotide sequence ID" value="NM_199352.6"/>
    <property type="RefSeq protein sequence ID" value="NP_955384.3"/>
</dbReference>
<dbReference type="UCSC" id="uc001nwr.2">
    <property type="organism name" value="human"/>
</dbReference>
<dbReference type="AGR" id="HGNC:32935"/>
<dbReference type="CTD" id="387601"/>
<dbReference type="DisGeNET" id="387601"/>
<dbReference type="GeneCards" id="SLC22A25"/>
<dbReference type="HGNC" id="HGNC:32935">
    <property type="gene designation" value="SLC22A25"/>
</dbReference>
<dbReference type="HPA" id="ENSG00000196600">
    <property type="expression patterns" value="Tissue enriched (liver)"/>
</dbReference>
<dbReference type="MalaCards" id="SLC22A25"/>
<dbReference type="MIM" id="610792">
    <property type="type" value="gene"/>
</dbReference>
<dbReference type="neXtProt" id="NX_Q6T423"/>
<dbReference type="OpenTargets" id="ENSG00000196600"/>
<dbReference type="PharmGKB" id="PA162403567"/>
<dbReference type="VEuPathDB" id="HostDB:ENSG00000196600"/>
<dbReference type="eggNOG" id="KOG0255">
    <property type="taxonomic scope" value="Eukaryota"/>
</dbReference>
<dbReference type="GeneTree" id="ENSGT00940000167143"/>
<dbReference type="HOGENOM" id="CLU_001265_33_3_1"/>
<dbReference type="InParanoid" id="Q6T423"/>
<dbReference type="OMA" id="VEWITHR"/>
<dbReference type="OrthoDB" id="2544694at2759"/>
<dbReference type="PAN-GO" id="Q6T423">
    <property type="GO annotations" value="1 GO annotation based on evolutionary models"/>
</dbReference>
<dbReference type="PhylomeDB" id="Q6T423"/>
<dbReference type="TreeFam" id="TF315847"/>
<dbReference type="PathwayCommons" id="Q6T423"/>
<dbReference type="BioGRID-ORCS" id="387601">
    <property type="hits" value="42 hits in 1143 CRISPR screens"/>
</dbReference>
<dbReference type="ChiTaRS" id="SLC22A25">
    <property type="organism name" value="human"/>
</dbReference>
<dbReference type="GeneWiki" id="SLC22A25"/>
<dbReference type="GenomeRNAi" id="387601"/>
<dbReference type="Pharos" id="Q6T423">
    <property type="development level" value="Tdark"/>
</dbReference>
<dbReference type="PRO" id="PR:Q6T423"/>
<dbReference type="Proteomes" id="UP000005640">
    <property type="component" value="Chromosome 11"/>
</dbReference>
<dbReference type="RNAct" id="Q6T423">
    <property type="molecule type" value="protein"/>
</dbReference>
<dbReference type="Bgee" id="ENSG00000196600">
    <property type="expression patterns" value="Expressed in right lobe of liver and 28 other cell types or tissues"/>
</dbReference>
<dbReference type="ExpressionAtlas" id="Q6T423">
    <property type="expression patterns" value="baseline and differential"/>
</dbReference>
<dbReference type="GO" id="GO:0016020">
    <property type="term" value="C:membrane"/>
    <property type="evidence" value="ECO:0007669"/>
    <property type="project" value="UniProtKB-SubCell"/>
</dbReference>
<dbReference type="GO" id="GO:0022857">
    <property type="term" value="F:transmembrane transporter activity"/>
    <property type="evidence" value="ECO:0007669"/>
    <property type="project" value="InterPro"/>
</dbReference>
<dbReference type="GO" id="GO:0015711">
    <property type="term" value="P:organic anion transport"/>
    <property type="evidence" value="ECO:0000318"/>
    <property type="project" value="GO_Central"/>
</dbReference>
<dbReference type="CDD" id="cd17374">
    <property type="entry name" value="MFS_OAT"/>
    <property type="match status" value="1"/>
</dbReference>
<dbReference type="FunFam" id="1.20.1250.20:FF:000023">
    <property type="entry name" value="Solute carrier family 22 member 6"/>
    <property type="match status" value="1"/>
</dbReference>
<dbReference type="Gene3D" id="1.20.1250.20">
    <property type="entry name" value="MFS general substrate transporter like domains"/>
    <property type="match status" value="1"/>
</dbReference>
<dbReference type="InterPro" id="IPR011701">
    <property type="entry name" value="MFS"/>
</dbReference>
<dbReference type="InterPro" id="IPR020846">
    <property type="entry name" value="MFS_dom"/>
</dbReference>
<dbReference type="InterPro" id="IPR036259">
    <property type="entry name" value="MFS_trans_sf"/>
</dbReference>
<dbReference type="PANTHER" id="PTHR24064">
    <property type="entry name" value="SOLUTE CARRIER FAMILY 22 MEMBER"/>
    <property type="match status" value="1"/>
</dbReference>
<dbReference type="Pfam" id="PF07690">
    <property type="entry name" value="MFS_1"/>
    <property type="match status" value="1"/>
</dbReference>
<dbReference type="SUPFAM" id="SSF103473">
    <property type="entry name" value="MFS general substrate transporter"/>
    <property type="match status" value="1"/>
</dbReference>
<dbReference type="PROSITE" id="PS50850">
    <property type="entry name" value="MFS"/>
    <property type="match status" value="1"/>
</dbReference>
<evidence type="ECO:0000255" key="1"/>
<evidence type="ECO:0000269" key="2">
    <source>
    </source>
</evidence>
<evidence type="ECO:0000269" key="3">
    <source>
    </source>
</evidence>
<evidence type="ECO:0000303" key="4">
    <source>
    </source>
</evidence>
<evidence type="ECO:0000305" key="5"/>
<evidence type="ECO:0000312" key="6">
    <source>
        <dbReference type="EMBL" id="AAI01317.1"/>
    </source>
</evidence>
<evidence type="ECO:0000312" key="7">
    <source>
        <dbReference type="EMBL" id="AAR84082.1"/>
    </source>
</evidence>
<evidence type="ECO:0000312" key="8">
    <source>
        <dbReference type="HGNC" id="HGNC:32935"/>
    </source>
</evidence>
<name>S22AP_HUMAN</name>
<organism>
    <name type="scientific">Homo sapiens</name>
    <name type="common">Human</name>
    <dbReference type="NCBI Taxonomy" id="9606"/>
    <lineage>
        <taxon>Eukaryota</taxon>
        <taxon>Metazoa</taxon>
        <taxon>Chordata</taxon>
        <taxon>Craniata</taxon>
        <taxon>Vertebrata</taxon>
        <taxon>Euteleostomi</taxon>
        <taxon>Mammalia</taxon>
        <taxon>Eutheria</taxon>
        <taxon>Euarchontoglires</taxon>
        <taxon>Primates</taxon>
        <taxon>Haplorrhini</taxon>
        <taxon>Catarrhini</taxon>
        <taxon>Hominidae</taxon>
        <taxon>Homo</taxon>
    </lineage>
</organism>
<accession>Q6T423</accession>
<accession>A4FU27</accession>
<proteinExistence type="evidence at transcript level"/>